<reference key="1">
    <citation type="journal article" date="1995" name="Mol. Biol. Cell">
        <title>Drosophila Wee1 kinase rescues fission yeast from mitotic catastrophe and phosphorylates Drosophila Cdc2 in vitro.</title>
        <authorList>
            <person name="Campbell S.D."/>
            <person name="Sprenger F."/>
            <person name="Edgar B.A."/>
            <person name="O'Farrell P.H."/>
        </authorList>
    </citation>
    <scope>NUCLEOTIDE SEQUENCE [MRNA]</scope>
    <scope>FUNCTION</scope>
    <scope>TISSUE SPECIFICITY</scope>
    <scope>DEVELOPMENTAL STAGE</scope>
</reference>
<reference key="2">
    <citation type="submission" date="1999-07" db="EMBL/GenBank/DDBJ databases">
        <authorList>
            <person name="Campbell S.D."/>
        </authorList>
    </citation>
    <scope>SEQUENCE REVISION TO C-TERMINUS</scope>
</reference>
<reference key="3">
    <citation type="journal article" date="2000" name="Science">
        <title>The genome sequence of Drosophila melanogaster.</title>
        <authorList>
            <person name="Adams M.D."/>
            <person name="Celniker S.E."/>
            <person name="Holt R.A."/>
            <person name="Evans C.A."/>
            <person name="Gocayne J.D."/>
            <person name="Amanatides P.G."/>
            <person name="Scherer S.E."/>
            <person name="Li P.W."/>
            <person name="Hoskins R.A."/>
            <person name="Galle R.F."/>
            <person name="George R.A."/>
            <person name="Lewis S.E."/>
            <person name="Richards S."/>
            <person name="Ashburner M."/>
            <person name="Henderson S.N."/>
            <person name="Sutton G.G."/>
            <person name="Wortman J.R."/>
            <person name="Yandell M.D."/>
            <person name="Zhang Q."/>
            <person name="Chen L.X."/>
            <person name="Brandon R.C."/>
            <person name="Rogers Y.-H.C."/>
            <person name="Blazej R.G."/>
            <person name="Champe M."/>
            <person name="Pfeiffer B.D."/>
            <person name="Wan K.H."/>
            <person name="Doyle C."/>
            <person name="Baxter E.G."/>
            <person name="Helt G."/>
            <person name="Nelson C.R."/>
            <person name="Miklos G.L.G."/>
            <person name="Abril J.F."/>
            <person name="Agbayani A."/>
            <person name="An H.-J."/>
            <person name="Andrews-Pfannkoch C."/>
            <person name="Baldwin D."/>
            <person name="Ballew R.M."/>
            <person name="Basu A."/>
            <person name="Baxendale J."/>
            <person name="Bayraktaroglu L."/>
            <person name="Beasley E.M."/>
            <person name="Beeson K.Y."/>
            <person name="Benos P.V."/>
            <person name="Berman B.P."/>
            <person name="Bhandari D."/>
            <person name="Bolshakov S."/>
            <person name="Borkova D."/>
            <person name="Botchan M.R."/>
            <person name="Bouck J."/>
            <person name="Brokstein P."/>
            <person name="Brottier P."/>
            <person name="Burtis K.C."/>
            <person name="Busam D.A."/>
            <person name="Butler H."/>
            <person name="Cadieu E."/>
            <person name="Center A."/>
            <person name="Chandra I."/>
            <person name="Cherry J.M."/>
            <person name="Cawley S."/>
            <person name="Dahlke C."/>
            <person name="Davenport L.B."/>
            <person name="Davies P."/>
            <person name="de Pablos B."/>
            <person name="Delcher A."/>
            <person name="Deng Z."/>
            <person name="Mays A.D."/>
            <person name="Dew I."/>
            <person name="Dietz S.M."/>
            <person name="Dodson K."/>
            <person name="Doup L.E."/>
            <person name="Downes M."/>
            <person name="Dugan-Rocha S."/>
            <person name="Dunkov B.C."/>
            <person name="Dunn P."/>
            <person name="Durbin K.J."/>
            <person name="Evangelista C.C."/>
            <person name="Ferraz C."/>
            <person name="Ferriera S."/>
            <person name="Fleischmann W."/>
            <person name="Fosler C."/>
            <person name="Gabrielian A.E."/>
            <person name="Garg N.S."/>
            <person name="Gelbart W.M."/>
            <person name="Glasser K."/>
            <person name="Glodek A."/>
            <person name="Gong F."/>
            <person name="Gorrell J.H."/>
            <person name="Gu Z."/>
            <person name="Guan P."/>
            <person name="Harris M."/>
            <person name="Harris N.L."/>
            <person name="Harvey D.A."/>
            <person name="Heiman T.J."/>
            <person name="Hernandez J.R."/>
            <person name="Houck J."/>
            <person name="Hostin D."/>
            <person name="Houston K.A."/>
            <person name="Howland T.J."/>
            <person name="Wei M.-H."/>
            <person name="Ibegwam C."/>
            <person name="Jalali M."/>
            <person name="Kalush F."/>
            <person name="Karpen G.H."/>
            <person name="Ke Z."/>
            <person name="Kennison J.A."/>
            <person name="Ketchum K.A."/>
            <person name="Kimmel B.E."/>
            <person name="Kodira C.D."/>
            <person name="Kraft C.L."/>
            <person name="Kravitz S."/>
            <person name="Kulp D."/>
            <person name="Lai Z."/>
            <person name="Lasko P."/>
            <person name="Lei Y."/>
            <person name="Levitsky A.A."/>
            <person name="Li J.H."/>
            <person name="Li Z."/>
            <person name="Liang Y."/>
            <person name="Lin X."/>
            <person name="Liu X."/>
            <person name="Mattei B."/>
            <person name="McIntosh T.C."/>
            <person name="McLeod M.P."/>
            <person name="McPherson D."/>
            <person name="Merkulov G."/>
            <person name="Milshina N.V."/>
            <person name="Mobarry C."/>
            <person name="Morris J."/>
            <person name="Moshrefi A."/>
            <person name="Mount S.M."/>
            <person name="Moy M."/>
            <person name="Murphy B."/>
            <person name="Murphy L."/>
            <person name="Muzny D.M."/>
            <person name="Nelson D.L."/>
            <person name="Nelson D.R."/>
            <person name="Nelson K.A."/>
            <person name="Nixon K."/>
            <person name="Nusskern D.R."/>
            <person name="Pacleb J.M."/>
            <person name="Palazzolo M."/>
            <person name="Pittman G.S."/>
            <person name="Pan S."/>
            <person name="Pollard J."/>
            <person name="Puri V."/>
            <person name="Reese M.G."/>
            <person name="Reinert K."/>
            <person name="Remington K."/>
            <person name="Saunders R.D.C."/>
            <person name="Scheeler F."/>
            <person name="Shen H."/>
            <person name="Shue B.C."/>
            <person name="Siden-Kiamos I."/>
            <person name="Simpson M."/>
            <person name="Skupski M.P."/>
            <person name="Smith T.J."/>
            <person name="Spier E."/>
            <person name="Spradling A.C."/>
            <person name="Stapleton M."/>
            <person name="Strong R."/>
            <person name="Sun E."/>
            <person name="Svirskas R."/>
            <person name="Tector C."/>
            <person name="Turner R."/>
            <person name="Venter E."/>
            <person name="Wang A.H."/>
            <person name="Wang X."/>
            <person name="Wang Z.-Y."/>
            <person name="Wassarman D.A."/>
            <person name="Weinstock G.M."/>
            <person name="Weissenbach J."/>
            <person name="Williams S.M."/>
            <person name="Woodage T."/>
            <person name="Worley K.C."/>
            <person name="Wu D."/>
            <person name="Yang S."/>
            <person name="Yao Q.A."/>
            <person name="Ye J."/>
            <person name="Yeh R.-F."/>
            <person name="Zaveri J.S."/>
            <person name="Zhan M."/>
            <person name="Zhang G."/>
            <person name="Zhao Q."/>
            <person name="Zheng L."/>
            <person name="Zheng X.H."/>
            <person name="Zhong F.N."/>
            <person name="Zhong W."/>
            <person name="Zhou X."/>
            <person name="Zhu S.C."/>
            <person name="Zhu X."/>
            <person name="Smith H.O."/>
            <person name="Gibbs R.A."/>
            <person name="Myers E.W."/>
            <person name="Rubin G.M."/>
            <person name="Venter J.C."/>
        </authorList>
    </citation>
    <scope>NUCLEOTIDE SEQUENCE [LARGE SCALE GENOMIC DNA]</scope>
    <source>
        <strain>Berkeley</strain>
    </source>
</reference>
<reference key="4">
    <citation type="journal article" date="2002" name="Genome Biol.">
        <title>Annotation of the Drosophila melanogaster euchromatic genome: a systematic review.</title>
        <authorList>
            <person name="Misra S."/>
            <person name="Crosby M.A."/>
            <person name="Mungall C.J."/>
            <person name="Matthews B.B."/>
            <person name="Campbell K.S."/>
            <person name="Hradecky P."/>
            <person name="Huang Y."/>
            <person name="Kaminker J.S."/>
            <person name="Millburn G.H."/>
            <person name="Prochnik S.E."/>
            <person name="Smith C.D."/>
            <person name="Tupy J.L."/>
            <person name="Whitfield E.J."/>
            <person name="Bayraktaroglu L."/>
            <person name="Berman B.P."/>
            <person name="Bettencourt B.R."/>
            <person name="Celniker S.E."/>
            <person name="de Grey A.D.N.J."/>
            <person name="Drysdale R.A."/>
            <person name="Harris N.L."/>
            <person name="Richter J."/>
            <person name="Russo S."/>
            <person name="Schroeder A.J."/>
            <person name="Shu S.Q."/>
            <person name="Stapleton M."/>
            <person name="Yamada C."/>
            <person name="Ashburner M."/>
            <person name="Gelbart W.M."/>
            <person name="Rubin G.M."/>
            <person name="Lewis S.E."/>
        </authorList>
    </citation>
    <scope>GENOME REANNOTATION</scope>
    <source>
        <strain>Berkeley</strain>
    </source>
</reference>
<reference key="5">
    <citation type="journal article" date="2002" name="Genome Biol.">
        <title>A Drosophila full-length cDNA resource.</title>
        <authorList>
            <person name="Stapleton M."/>
            <person name="Carlson J.W."/>
            <person name="Brokstein P."/>
            <person name="Yu C."/>
            <person name="Champe M."/>
            <person name="George R.A."/>
            <person name="Guarin H."/>
            <person name="Kronmiller B."/>
            <person name="Pacleb J.M."/>
            <person name="Park S."/>
            <person name="Wan K.H."/>
            <person name="Rubin G.M."/>
            <person name="Celniker S.E."/>
        </authorList>
    </citation>
    <scope>NUCLEOTIDE SEQUENCE [LARGE SCALE MRNA]</scope>
    <source>
        <strain>Berkeley</strain>
        <tissue>Embryo</tissue>
    </source>
</reference>
<reference key="6">
    <citation type="journal article" date="2004" name="Dev. Biol.">
        <title>Mother-daughter precursor cell fate transformation after Cdc2 down-regulation in the Drosophila bristle lineage.</title>
        <authorList>
            <person name="Fichelson P."/>
            <person name="Gho M."/>
        </authorList>
    </citation>
    <scope>FUNCTION</scope>
</reference>
<reference key="7">
    <citation type="journal article" date="2008" name="J. Proteome Res.">
        <title>Phosphoproteome analysis of Drosophila melanogaster embryos.</title>
        <authorList>
            <person name="Zhai B."/>
            <person name="Villen J."/>
            <person name="Beausoleil S.A."/>
            <person name="Mintseris J."/>
            <person name="Gygi S.P."/>
        </authorList>
    </citation>
    <scope>PHOSPHORYLATION [LARGE SCALE ANALYSIS] AT SER-23; SER-25; SER-27; THR-47; SER-52; THR-165 AND SER-168</scope>
    <scope>IDENTIFICATION BY MASS SPECTROMETRY</scope>
    <source>
        <tissue>Embryo</tissue>
    </source>
</reference>
<evidence type="ECO:0000250" key="1"/>
<evidence type="ECO:0000255" key="2">
    <source>
        <dbReference type="PROSITE-ProRule" id="PRU00159"/>
    </source>
</evidence>
<evidence type="ECO:0000256" key="3">
    <source>
        <dbReference type="SAM" id="MobiDB-lite"/>
    </source>
</evidence>
<evidence type="ECO:0000269" key="4">
    <source>
    </source>
</evidence>
<evidence type="ECO:0000269" key="5">
    <source>
    </source>
</evidence>
<evidence type="ECO:0000269" key="6">
    <source>
    </source>
</evidence>
<evidence type="ECO:0000305" key="7"/>
<evidence type="ECO:0000312" key="8">
    <source>
        <dbReference type="FlyBase" id="FBgn0011737"/>
    </source>
</evidence>
<gene>
    <name evidence="8" type="primary">Wee1</name>
    <name type="synonym">wee</name>
    <name evidence="8" type="ORF">CG4488</name>
</gene>
<sequence>MAFRQSEHEMSVTSLDSSVELRSRSPSPQVFNPRKLRFADDDFDKDTPEGASPQHPLQQRPKLSSGEEQQLDSKIGKEGGDGDVSMSPPCQKVRALRLFSTPATPKTILQKSTTQCSNHLSAAAAAVNASRRSDDLFRLSERPRSLPLHNRKLPTQDTANVNPFTPDSLMAHNKKRCRTQFGRENLNLNVNAMQKYLLSDACDDDVTEEAGDSMREIHQQAPKRLALHDTNISRFKREFMQVNVIGVGEFGVVFQCVNRLDGCIYAIKKSKKPVAGSSFEKRALNEVWAHAVLGKHDNVVRYYSAWAEDDHMLIQNEFCDGGSLHARIQDHCLGEAELKIVLMHVIEGLRYIHSNDLVHMDLKPENIFSTMNPNAHKLVEVQPQQTKDDDGMDSVYEELRHSENLVTYKIGDLGHVTSVKEPYVEEGDCRYLPKEILHEDYSNLFKADIFSLGITLFEAAGGGPLPKNGPEWHNLRDGKVPILPSLSRDFNELIAQMMHPYPDKRPTSQSIFSHPILSAVDSKSKLQLGLELTVEKRKNEILMNKLREAKKQIKLLEQRVNLLAVTNNPDSLDGQRCLRSFTRRMRTPFSSHGKFDSISDRNKNVITNI</sequence>
<organism>
    <name type="scientific">Drosophila melanogaster</name>
    <name type="common">Fruit fly</name>
    <dbReference type="NCBI Taxonomy" id="7227"/>
    <lineage>
        <taxon>Eukaryota</taxon>
        <taxon>Metazoa</taxon>
        <taxon>Ecdysozoa</taxon>
        <taxon>Arthropoda</taxon>
        <taxon>Hexapoda</taxon>
        <taxon>Insecta</taxon>
        <taxon>Pterygota</taxon>
        <taxon>Neoptera</taxon>
        <taxon>Endopterygota</taxon>
        <taxon>Diptera</taxon>
        <taxon>Brachycera</taxon>
        <taxon>Muscomorpha</taxon>
        <taxon>Ephydroidea</taxon>
        <taxon>Drosophilidae</taxon>
        <taxon>Drosophila</taxon>
        <taxon>Sophophora</taxon>
    </lineage>
</organism>
<protein>
    <recommendedName>
        <fullName>Wee1-like protein kinase</fullName>
        <shortName>Dwee1</shortName>
        <ecNumber>2.7.10.2</ecNumber>
    </recommendedName>
</protein>
<comment type="function">
    <text evidence="4 6">Acts as a negative regulator of entry into mitosis (G2 to M transition) (PubMed:15581871, PubMed:8573790). This kinase specifically phosphorylates and inactivates cyclin B1-complexed CDC2 (PubMed:15581871, PubMed:8573790).</text>
</comment>
<comment type="catalytic activity">
    <reaction>
        <text>L-tyrosyl-[protein] + ATP = O-phospho-L-tyrosyl-[protein] + ADP + H(+)</text>
        <dbReference type="Rhea" id="RHEA:10596"/>
        <dbReference type="Rhea" id="RHEA-COMP:10136"/>
        <dbReference type="Rhea" id="RHEA-COMP:20101"/>
        <dbReference type="ChEBI" id="CHEBI:15378"/>
        <dbReference type="ChEBI" id="CHEBI:30616"/>
        <dbReference type="ChEBI" id="CHEBI:46858"/>
        <dbReference type="ChEBI" id="CHEBI:61978"/>
        <dbReference type="ChEBI" id="CHEBI:456216"/>
        <dbReference type="EC" id="2.7.10.2"/>
    </reaction>
</comment>
<comment type="cofactor">
    <cofactor evidence="1">
        <name>Mg(2+)</name>
        <dbReference type="ChEBI" id="CHEBI:18420"/>
    </cofactor>
    <text evidence="1">Binds 2 magnesium ions per subunit.</text>
</comment>
<comment type="activity regulation">
    <text>Negatively regulated by phosphorylation in the M-phase.</text>
</comment>
<comment type="subcellular location">
    <subcellularLocation>
        <location evidence="1">Nucleus</location>
    </subcellularLocation>
</comment>
<comment type="tissue specificity">
    <text evidence="6">Expressed in embryos; expression remains high in the proliferating cells of the central nervous system well after cells in the rest of the embryo have ceased dividing.</text>
</comment>
<comment type="developmental stage">
    <text evidence="6">Expressed both maternally and zygotically during postblastoderm divisions of embryogenesis.</text>
</comment>
<comment type="PTM">
    <text evidence="1">Phosphorylated during M and G1 phases.</text>
</comment>
<comment type="similarity">
    <text evidence="2">Belongs to the protein kinase superfamily. Ser/Thr protein kinase family. WEE1 subfamily.</text>
</comment>
<accession>P54350</accession>
<accession>Q9VM70</accession>
<proteinExistence type="evidence at protein level"/>
<name>WEE1_DROME</name>
<dbReference type="EC" id="2.7.10.2"/>
<dbReference type="EMBL" id="U17223">
    <property type="protein sequence ID" value="AAC46913.2"/>
    <property type="molecule type" value="mRNA"/>
</dbReference>
<dbReference type="EMBL" id="AE014134">
    <property type="protein sequence ID" value="AAF52453.2"/>
    <property type="molecule type" value="Genomic_DNA"/>
</dbReference>
<dbReference type="EMBL" id="AY118942">
    <property type="protein sequence ID" value="AAM50802.1"/>
    <property type="molecule type" value="mRNA"/>
</dbReference>
<dbReference type="RefSeq" id="NP_001260167.1">
    <property type="nucleotide sequence ID" value="NM_001273238.1"/>
</dbReference>
<dbReference type="RefSeq" id="NP_477035.1">
    <property type="nucleotide sequence ID" value="NM_057687.4"/>
</dbReference>
<dbReference type="SMR" id="P54350"/>
<dbReference type="BioGRID" id="60116">
    <property type="interactions" value="21"/>
</dbReference>
<dbReference type="DIP" id="DIP-23536N"/>
<dbReference type="FunCoup" id="P54350">
    <property type="interactions" value="1428"/>
</dbReference>
<dbReference type="IntAct" id="P54350">
    <property type="interactions" value="3"/>
</dbReference>
<dbReference type="STRING" id="7227.FBpp0304607"/>
<dbReference type="iPTMnet" id="P54350"/>
<dbReference type="PaxDb" id="7227-FBpp0304607"/>
<dbReference type="DNASU" id="33965"/>
<dbReference type="EnsemblMetazoa" id="FBtr0079371">
    <property type="protein sequence ID" value="FBpp0078999"/>
    <property type="gene ID" value="FBgn0011737"/>
</dbReference>
<dbReference type="EnsemblMetazoa" id="FBtr0332329">
    <property type="protein sequence ID" value="FBpp0304607"/>
    <property type="gene ID" value="FBgn0011737"/>
</dbReference>
<dbReference type="GeneID" id="33965"/>
<dbReference type="KEGG" id="dme:Dmel_CG4488"/>
<dbReference type="AGR" id="FB:FBgn0011737"/>
<dbReference type="CTD" id="7465"/>
<dbReference type="FlyBase" id="FBgn0011737">
    <property type="gene designation" value="Wee1"/>
</dbReference>
<dbReference type="VEuPathDB" id="VectorBase:FBgn0011737"/>
<dbReference type="eggNOG" id="KOG0601">
    <property type="taxonomic scope" value="Eukaryota"/>
</dbReference>
<dbReference type="GeneTree" id="ENSGT00940000170756"/>
<dbReference type="HOGENOM" id="CLU_000288_25_1_1"/>
<dbReference type="InParanoid" id="P54350"/>
<dbReference type="OMA" id="TIFNHPV"/>
<dbReference type="OrthoDB" id="5337378at2759"/>
<dbReference type="PhylomeDB" id="P54350"/>
<dbReference type="BRENDA" id="2.7.10.2">
    <property type="organism ID" value="1994"/>
</dbReference>
<dbReference type="Reactome" id="R-DME-156711">
    <property type="pathway name" value="Polo-like kinase mediated events"/>
</dbReference>
<dbReference type="Reactome" id="R-DME-69202">
    <property type="pathway name" value="Cyclin E associated events during G1/S transition"/>
</dbReference>
<dbReference type="Reactome" id="R-DME-69273">
    <property type="pathway name" value="Cyclin A/B1/B2 associated events during G2/M transition"/>
</dbReference>
<dbReference type="Reactome" id="R-DME-69478">
    <property type="pathway name" value="G2/M DNA replication checkpoint"/>
</dbReference>
<dbReference type="Reactome" id="R-DME-69656">
    <property type="pathway name" value="Cyclin A:Cdk2-associated events at S phase entry"/>
</dbReference>
<dbReference type="Reactome" id="R-DME-75035">
    <property type="pathway name" value="Chk1/Chk2(Cds1) mediated inactivation of Cyclin B:Cdk1 complex"/>
</dbReference>
<dbReference type="SignaLink" id="P54350"/>
<dbReference type="BioGRID-ORCS" id="33965">
    <property type="hits" value="0 hits in 3 CRISPR screens"/>
</dbReference>
<dbReference type="GenomeRNAi" id="33965"/>
<dbReference type="PRO" id="PR:P54350"/>
<dbReference type="Proteomes" id="UP000000803">
    <property type="component" value="Chromosome 2L"/>
</dbReference>
<dbReference type="Bgee" id="FBgn0011737">
    <property type="expression patterns" value="Expressed in cleaving embryo and 84 other cell types or tissues"/>
</dbReference>
<dbReference type="ExpressionAtlas" id="P54350">
    <property type="expression patterns" value="baseline and differential"/>
</dbReference>
<dbReference type="GO" id="GO:0005737">
    <property type="term" value="C:cytoplasm"/>
    <property type="evidence" value="ECO:0000318"/>
    <property type="project" value="GO_Central"/>
</dbReference>
<dbReference type="GO" id="GO:0005634">
    <property type="term" value="C:nucleus"/>
    <property type="evidence" value="ECO:0000314"/>
    <property type="project" value="FlyBase"/>
</dbReference>
<dbReference type="GO" id="GO:0005524">
    <property type="term" value="F:ATP binding"/>
    <property type="evidence" value="ECO:0007669"/>
    <property type="project" value="UniProtKB-KW"/>
</dbReference>
<dbReference type="GO" id="GO:0004861">
    <property type="term" value="F:cyclin-dependent protein serine/threonine kinase inhibitor activity"/>
    <property type="evidence" value="ECO:0000314"/>
    <property type="project" value="FlyBase"/>
</dbReference>
<dbReference type="GO" id="GO:0000287">
    <property type="term" value="F:magnesium ion binding"/>
    <property type="evidence" value="ECO:0007669"/>
    <property type="project" value="InterPro"/>
</dbReference>
<dbReference type="GO" id="GO:0004715">
    <property type="term" value="F:non-membrane spanning protein tyrosine kinase activity"/>
    <property type="evidence" value="ECO:0007669"/>
    <property type="project" value="UniProtKB-EC"/>
</dbReference>
<dbReference type="GO" id="GO:0004713">
    <property type="term" value="F:protein tyrosine kinase activity"/>
    <property type="evidence" value="ECO:0000314"/>
    <property type="project" value="FlyBase"/>
</dbReference>
<dbReference type="GO" id="GO:0051301">
    <property type="term" value="P:cell division"/>
    <property type="evidence" value="ECO:0007669"/>
    <property type="project" value="UniProtKB-KW"/>
</dbReference>
<dbReference type="GO" id="GO:0051642">
    <property type="term" value="P:centrosome localization"/>
    <property type="evidence" value="ECO:0000315"/>
    <property type="project" value="FlyBase"/>
</dbReference>
<dbReference type="GO" id="GO:0051299">
    <property type="term" value="P:centrosome separation"/>
    <property type="evidence" value="ECO:0000315"/>
    <property type="project" value="FlyBase"/>
</dbReference>
<dbReference type="GO" id="GO:0001700">
    <property type="term" value="P:embryonic development via the syncytial blastoderm"/>
    <property type="evidence" value="ECO:0000304"/>
    <property type="project" value="FlyBase"/>
</dbReference>
<dbReference type="GO" id="GO:0000278">
    <property type="term" value="P:mitotic cell cycle"/>
    <property type="evidence" value="ECO:0007669"/>
    <property type="project" value="InterPro"/>
</dbReference>
<dbReference type="GO" id="GO:0010972">
    <property type="term" value="P:negative regulation of G2/M transition of mitotic cell cycle"/>
    <property type="evidence" value="ECO:0000316"/>
    <property type="project" value="FlyBase"/>
</dbReference>
<dbReference type="GO" id="GO:0051225">
    <property type="term" value="P:spindle assembly"/>
    <property type="evidence" value="ECO:0000315"/>
    <property type="project" value="FlyBase"/>
</dbReference>
<dbReference type="CDD" id="cd14051">
    <property type="entry name" value="PTKc_Wee1"/>
    <property type="match status" value="1"/>
</dbReference>
<dbReference type="FunFam" id="3.30.200.20:FF:000115">
    <property type="entry name" value="Wee1-like kinase 2"/>
    <property type="match status" value="1"/>
</dbReference>
<dbReference type="Gene3D" id="3.30.200.20">
    <property type="entry name" value="Phosphorylase Kinase, domain 1"/>
    <property type="match status" value="1"/>
</dbReference>
<dbReference type="Gene3D" id="1.10.510.10">
    <property type="entry name" value="Transferase(Phosphotransferase) domain 1"/>
    <property type="match status" value="1"/>
</dbReference>
<dbReference type="InterPro" id="IPR050339">
    <property type="entry name" value="CC_SR_Kinase"/>
</dbReference>
<dbReference type="InterPro" id="IPR011009">
    <property type="entry name" value="Kinase-like_dom_sf"/>
</dbReference>
<dbReference type="InterPro" id="IPR000719">
    <property type="entry name" value="Prot_kinase_dom"/>
</dbReference>
<dbReference type="InterPro" id="IPR017441">
    <property type="entry name" value="Protein_kinase_ATP_BS"/>
</dbReference>
<dbReference type="InterPro" id="IPR017164">
    <property type="entry name" value="Wee1-like_protein_kinase"/>
</dbReference>
<dbReference type="PANTHER" id="PTHR11042">
    <property type="entry name" value="EUKARYOTIC TRANSLATION INITIATION FACTOR 2-ALPHA KINASE EIF2-ALPHA KINASE -RELATED"/>
    <property type="match status" value="1"/>
</dbReference>
<dbReference type="PANTHER" id="PTHR11042:SF185">
    <property type="entry name" value="WEE1-LIKE PROTEIN KINASE"/>
    <property type="match status" value="1"/>
</dbReference>
<dbReference type="Pfam" id="PF00069">
    <property type="entry name" value="Pkinase"/>
    <property type="match status" value="1"/>
</dbReference>
<dbReference type="PIRSF" id="PIRSF037281">
    <property type="entry name" value="Wee1-like_protein_kinase"/>
    <property type="match status" value="1"/>
</dbReference>
<dbReference type="SMART" id="SM00220">
    <property type="entry name" value="S_TKc"/>
    <property type="match status" value="1"/>
</dbReference>
<dbReference type="SUPFAM" id="SSF56112">
    <property type="entry name" value="Protein kinase-like (PK-like)"/>
    <property type="match status" value="1"/>
</dbReference>
<dbReference type="PROSITE" id="PS00107">
    <property type="entry name" value="PROTEIN_KINASE_ATP"/>
    <property type="match status" value="1"/>
</dbReference>
<dbReference type="PROSITE" id="PS50011">
    <property type="entry name" value="PROTEIN_KINASE_DOM"/>
    <property type="match status" value="1"/>
</dbReference>
<feature type="chain" id="PRO_0000086814" description="Wee1-like protein kinase">
    <location>
        <begin position="1"/>
        <end position="609"/>
    </location>
</feature>
<feature type="domain" description="Protein kinase" evidence="2">
    <location>
        <begin position="239"/>
        <end position="517"/>
    </location>
</feature>
<feature type="region of interest" description="Disordered" evidence="3">
    <location>
        <begin position="1"/>
        <end position="88"/>
    </location>
</feature>
<feature type="region of interest" description="Disordered" evidence="3">
    <location>
        <begin position="147"/>
        <end position="166"/>
    </location>
</feature>
<feature type="compositionally biased region" description="Basic and acidic residues" evidence="3">
    <location>
        <begin position="1"/>
        <end position="10"/>
    </location>
</feature>
<feature type="compositionally biased region" description="Basic and acidic residues" evidence="3">
    <location>
        <begin position="37"/>
        <end position="48"/>
    </location>
</feature>
<feature type="compositionally biased region" description="Polar residues" evidence="3">
    <location>
        <begin position="153"/>
        <end position="165"/>
    </location>
</feature>
<feature type="active site" description="Proton acceptor" evidence="2">
    <location>
        <position position="361"/>
    </location>
</feature>
<feature type="binding site" evidence="2">
    <location>
        <begin position="245"/>
        <end position="253"/>
    </location>
    <ligand>
        <name>ATP</name>
        <dbReference type="ChEBI" id="CHEBI:30616"/>
    </ligand>
</feature>
<feature type="binding site" evidence="2">
    <location>
        <position position="268"/>
    </location>
    <ligand>
        <name>ATP</name>
        <dbReference type="ChEBI" id="CHEBI:30616"/>
    </ligand>
</feature>
<feature type="binding site" evidence="1">
    <location>
        <position position="366"/>
    </location>
    <ligand>
        <name>Mg(2+)</name>
        <dbReference type="ChEBI" id="CHEBI:18420"/>
    </ligand>
</feature>
<feature type="binding site" evidence="1">
    <location>
        <position position="412"/>
    </location>
    <ligand>
        <name>Mg(2+)</name>
        <dbReference type="ChEBI" id="CHEBI:18420"/>
    </ligand>
</feature>
<feature type="modified residue" description="Phosphoserine" evidence="5">
    <location>
        <position position="23"/>
    </location>
</feature>
<feature type="modified residue" description="Phosphoserine" evidence="5">
    <location>
        <position position="25"/>
    </location>
</feature>
<feature type="modified residue" description="Phosphoserine" evidence="5">
    <location>
        <position position="27"/>
    </location>
</feature>
<feature type="modified residue" description="Phosphothreonine" evidence="5">
    <location>
        <position position="47"/>
    </location>
</feature>
<feature type="modified residue" description="Phosphoserine" evidence="5">
    <location>
        <position position="52"/>
    </location>
</feature>
<feature type="modified residue" description="Phosphothreonine" evidence="5">
    <location>
        <position position="165"/>
    </location>
</feature>
<feature type="modified residue" description="Phosphoserine" evidence="5">
    <location>
        <position position="168"/>
    </location>
</feature>
<feature type="sequence conflict" description="In Ref. 1; AAC46913." evidence="7" ref="1">
    <original>KL</original>
    <variation>NV</variation>
    <location>
        <begin position="35"/>
        <end position="36"/>
    </location>
</feature>
<feature type="sequence conflict" description="In Ref. 1; AAC46913." evidence="7" ref="1">
    <original>D</original>
    <variation>G</variation>
    <location>
        <position position="72"/>
    </location>
</feature>
<feature type="sequence conflict" description="In Ref. 1; AAC46913." evidence="7" ref="1">
    <original>A</original>
    <variation>R</variation>
    <location>
        <position position="275"/>
    </location>
</feature>
<feature type="sequence conflict" description="In Ref. 1; AAC46913." evidence="7" ref="1">
    <original>N</original>
    <variation>K</variation>
    <location>
        <position position="567"/>
    </location>
</feature>
<keyword id="KW-0067">ATP-binding</keyword>
<keyword id="KW-0131">Cell cycle</keyword>
<keyword id="KW-0132">Cell division</keyword>
<keyword id="KW-0418">Kinase</keyword>
<keyword id="KW-0460">Magnesium</keyword>
<keyword id="KW-0479">Metal-binding</keyword>
<keyword id="KW-0498">Mitosis</keyword>
<keyword id="KW-0547">Nucleotide-binding</keyword>
<keyword id="KW-0539">Nucleus</keyword>
<keyword id="KW-0597">Phosphoprotein</keyword>
<keyword id="KW-1185">Reference proteome</keyword>
<keyword id="KW-0808">Transferase</keyword>
<keyword id="KW-0829">Tyrosine-protein kinase</keyword>